<protein>
    <recommendedName>
        <fullName evidence="1">dTTP/UTP pyrophosphatase</fullName>
        <shortName evidence="1">dTTPase/UTPase</shortName>
        <ecNumber evidence="1">3.6.1.9</ecNumber>
    </recommendedName>
    <alternativeName>
        <fullName evidence="1">Nucleoside triphosphate pyrophosphatase</fullName>
    </alternativeName>
    <alternativeName>
        <fullName evidence="1">Nucleotide pyrophosphatase</fullName>
        <shortName evidence="1">Nucleotide PPase</shortName>
    </alternativeName>
</protein>
<evidence type="ECO:0000255" key="1">
    <source>
        <dbReference type="HAMAP-Rule" id="MF_00528"/>
    </source>
</evidence>
<reference key="1">
    <citation type="journal article" date="2007" name="Genome Res.">
        <title>Genome sequence of a proteolytic (Group I) Clostridium botulinum strain Hall A and comparative analysis of the clostridial genomes.</title>
        <authorList>
            <person name="Sebaihia M."/>
            <person name="Peck M.W."/>
            <person name="Minton N.P."/>
            <person name="Thomson N.R."/>
            <person name="Holden M.T.G."/>
            <person name="Mitchell W.J."/>
            <person name="Carter A.T."/>
            <person name="Bentley S.D."/>
            <person name="Mason D.R."/>
            <person name="Crossman L."/>
            <person name="Paul C.J."/>
            <person name="Ivens A."/>
            <person name="Wells-Bennik M.H.J."/>
            <person name="Davis I.J."/>
            <person name="Cerdeno-Tarraga A.M."/>
            <person name="Churcher C."/>
            <person name="Quail M.A."/>
            <person name="Chillingworth T."/>
            <person name="Feltwell T."/>
            <person name="Fraser A."/>
            <person name="Goodhead I."/>
            <person name="Hance Z."/>
            <person name="Jagels K."/>
            <person name="Larke N."/>
            <person name="Maddison M."/>
            <person name="Moule S."/>
            <person name="Mungall K."/>
            <person name="Norbertczak H."/>
            <person name="Rabbinowitsch E."/>
            <person name="Sanders M."/>
            <person name="Simmonds M."/>
            <person name="White B."/>
            <person name="Whithead S."/>
            <person name="Parkhill J."/>
        </authorList>
    </citation>
    <scope>NUCLEOTIDE SEQUENCE [LARGE SCALE GENOMIC DNA]</scope>
    <source>
        <strain>Hall / ATCC 3502 / NCTC 13319 / Type A</strain>
    </source>
</reference>
<reference key="2">
    <citation type="journal article" date="2007" name="PLoS ONE">
        <title>Analysis of the neurotoxin complex genes in Clostridium botulinum A1-A4 and B1 strains: BoNT/A3, /Ba4 and /B1 clusters are located within plasmids.</title>
        <authorList>
            <person name="Smith T.J."/>
            <person name="Hill K.K."/>
            <person name="Foley B.T."/>
            <person name="Detter J.C."/>
            <person name="Munk A.C."/>
            <person name="Bruce D.C."/>
            <person name="Doggett N.A."/>
            <person name="Smith L.A."/>
            <person name="Marks J.D."/>
            <person name="Xie G."/>
            <person name="Brettin T.S."/>
        </authorList>
    </citation>
    <scope>NUCLEOTIDE SEQUENCE [LARGE SCALE GENOMIC DNA]</scope>
    <source>
        <strain>Hall / ATCC 3502 / NCTC 13319 / Type A</strain>
    </source>
</reference>
<comment type="function">
    <text evidence="1">Nucleoside triphosphate pyrophosphatase that hydrolyzes dTTP and UTP. May have a dual role in cell division arrest and in preventing the incorporation of modified nucleotides into cellular nucleic acids.</text>
</comment>
<comment type="catalytic activity">
    <reaction evidence="1">
        <text>dTTP + H2O = dTMP + diphosphate + H(+)</text>
        <dbReference type="Rhea" id="RHEA:28534"/>
        <dbReference type="ChEBI" id="CHEBI:15377"/>
        <dbReference type="ChEBI" id="CHEBI:15378"/>
        <dbReference type="ChEBI" id="CHEBI:33019"/>
        <dbReference type="ChEBI" id="CHEBI:37568"/>
        <dbReference type="ChEBI" id="CHEBI:63528"/>
        <dbReference type="EC" id="3.6.1.9"/>
    </reaction>
</comment>
<comment type="catalytic activity">
    <reaction evidence="1">
        <text>UTP + H2O = UMP + diphosphate + H(+)</text>
        <dbReference type="Rhea" id="RHEA:29395"/>
        <dbReference type="ChEBI" id="CHEBI:15377"/>
        <dbReference type="ChEBI" id="CHEBI:15378"/>
        <dbReference type="ChEBI" id="CHEBI:33019"/>
        <dbReference type="ChEBI" id="CHEBI:46398"/>
        <dbReference type="ChEBI" id="CHEBI:57865"/>
        <dbReference type="EC" id="3.6.1.9"/>
    </reaction>
</comment>
<comment type="cofactor">
    <cofactor evidence="1">
        <name>a divalent metal cation</name>
        <dbReference type="ChEBI" id="CHEBI:60240"/>
    </cofactor>
</comment>
<comment type="subcellular location">
    <subcellularLocation>
        <location evidence="1">Cytoplasm</location>
    </subcellularLocation>
</comment>
<comment type="similarity">
    <text evidence="1">Belongs to the Maf family. YhdE subfamily.</text>
</comment>
<gene>
    <name type="ordered locus">CBO3004</name>
    <name type="ordered locus">CLC_2901</name>
</gene>
<organism>
    <name type="scientific">Clostridium botulinum (strain Hall / ATCC 3502 / NCTC 13319 / Type A)</name>
    <dbReference type="NCBI Taxonomy" id="441771"/>
    <lineage>
        <taxon>Bacteria</taxon>
        <taxon>Bacillati</taxon>
        <taxon>Bacillota</taxon>
        <taxon>Clostridia</taxon>
        <taxon>Eubacteriales</taxon>
        <taxon>Clostridiaceae</taxon>
        <taxon>Clostridium</taxon>
    </lineage>
</organism>
<dbReference type="EC" id="3.6.1.9" evidence="1"/>
<dbReference type="EMBL" id="CP000727">
    <property type="protein sequence ID" value="ABS36673.1"/>
    <property type="molecule type" value="Genomic_DNA"/>
</dbReference>
<dbReference type="EMBL" id="AM412317">
    <property type="protein sequence ID" value="CAL84566.1"/>
    <property type="molecule type" value="Genomic_DNA"/>
</dbReference>
<dbReference type="RefSeq" id="WP_012048033.1">
    <property type="nucleotide sequence ID" value="NC_009698.1"/>
</dbReference>
<dbReference type="RefSeq" id="YP_001255496.1">
    <property type="nucleotide sequence ID" value="NC_009495.1"/>
</dbReference>
<dbReference type="RefSeq" id="YP_001388732.1">
    <property type="nucleotide sequence ID" value="NC_009698.1"/>
</dbReference>
<dbReference type="SMR" id="A5I684"/>
<dbReference type="GeneID" id="5187263"/>
<dbReference type="KEGG" id="cbh:CLC_2901"/>
<dbReference type="KEGG" id="cbo:CBO3004"/>
<dbReference type="PATRIC" id="fig|413999.7.peg.2982"/>
<dbReference type="HOGENOM" id="CLU_040416_0_0_9"/>
<dbReference type="PRO" id="PR:A5I684"/>
<dbReference type="Proteomes" id="UP000001986">
    <property type="component" value="Chromosome"/>
</dbReference>
<dbReference type="GO" id="GO:0005737">
    <property type="term" value="C:cytoplasm"/>
    <property type="evidence" value="ECO:0007669"/>
    <property type="project" value="UniProtKB-SubCell"/>
</dbReference>
<dbReference type="GO" id="GO:0036218">
    <property type="term" value="F:dTTP diphosphatase activity"/>
    <property type="evidence" value="ECO:0007669"/>
    <property type="project" value="RHEA"/>
</dbReference>
<dbReference type="GO" id="GO:0047429">
    <property type="term" value="F:nucleoside triphosphate diphosphatase activity"/>
    <property type="evidence" value="ECO:0000318"/>
    <property type="project" value="GO_Central"/>
</dbReference>
<dbReference type="GO" id="GO:0036221">
    <property type="term" value="F:UTP diphosphatase activity"/>
    <property type="evidence" value="ECO:0007669"/>
    <property type="project" value="RHEA"/>
</dbReference>
<dbReference type="GO" id="GO:0009117">
    <property type="term" value="P:nucleotide metabolic process"/>
    <property type="evidence" value="ECO:0007669"/>
    <property type="project" value="UniProtKB-KW"/>
</dbReference>
<dbReference type="CDD" id="cd00555">
    <property type="entry name" value="Maf"/>
    <property type="match status" value="1"/>
</dbReference>
<dbReference type="FunFam" id="3.90.950.10:FF:000016">
    <property type="entry name" value="dTTP/UTP pyrophosphatase"/>
    <property type="match status" value="1"/>
</dbReference>
<dbReference type="Gene3D" id="3.90.950.10">
    <property type="match status" value="1"/>
</dbReference>
<dbReference type="HAMAP" id="MF_00528">
    <property type="entry name" value="Maf"/>
    <property type="match status" value="1"/>
</dbReference>
<dbReference type="InterPro" id="IPR029001">
    <property type="entry name" value="ITPase-like_fam"/>
</dbReference>
<dbReference type="InterPro" id="IPR003697">
    <property type="entry name" value="Maf-like"/>
</dbReference>
<dbReference type="NCBIfam" id="TIGR00172">
    <property type="entry name" value="maf"/>
    <property type="match status" value="1"/>
</dbReference>
<dbReference type="NCBIfam" id="NF000867">
    <property type="entry name" value="PRK00078.1"/>
    <property type="match status" value="1"/>
</dbReference>
<dbReference type="PANTHER" id="PTHR43213">
    <property type="entry name" value="BIFUNCTIONAL DTTP/UTP PYROPHOSPHATASE/METHYLTRANSFERASE PROTEIN-RELATED"/>
    <property type="match status" value="1"/>
</dbReference>
<dbReference type="PANTHER" id="PTHR43213:SF5">
    <property type="entry name" value="BIFUNCTIONAL DTTP_UTP PYROPHOSPHATASE_METHYLTRANSFERASE PROTEIN-RELATED"/>
    <property type="match status" value="1"/>
</dbReference>
<dbReference type="Pfam" id="PF02545">
    <property type="entry name" value="Maf"/>
    <property type="match status" value="1"/>
</dbReference>
<dbReference type="PIRSF" id="PIRSF006305">
    <property type="entry name" value="Maf"/>
    <property type="match status" value="1"/>
</dbReference>
<dbReference type="SUPFAM" id="SSF52972">
    <property type="entry name" value="ITPase-like"/>
    <property type="match status" value="1"/>
</dbReference>
<sequence>MKNIILASASERRQELLKRILEDFQIIVSDFDESSAPFKDNIPSYVMNLAEGKARSVSKKIMDQDSNLVIGCDTLVAFNNKVLGKPKDKKDAFEMLQALSGNEHEVYSGLAILDVKSNKIITDFVCTKVKFSKLTSLQIEKYINTGDSMDKAGAYGIQGKAGVFVENINGCYYNVVGLPLNKLNSMLMEMGVNL</sequence>
<keyword id="KW-0963">Cytoplasm</keyword>
<keyword id="KW-0378">Hydrolase</keyword>
<keyword id="KW-0546">Nucleotide metabolism</keyword>
<keyword id="KW-1185">Reference proteome</keyword>
<feature type="chain" id="PRO_1000127780" description="dTTP/UTP pyrophosphatase">
    <location>
        <begin position="1"/>
        <end position="194"/>
    </location>
</feature>
<feature type="active site" description="Proton acceptor" evidence="1">
    <location>
        <position position="73"/>
    </location>
</feature>
<feature type="site" description="Important for substrate specificity" evidence="1">
    <location>
        <position position="12"/>
    </location>
</feature>
<feature type="site" description="Important for substrate specificity" evidence="1">
    <location>
        <position position="74"/>
    </location>
</feature>
<feature type="site" description="Important for substrate specificity" evidence="1">
    <location>
        <position position="158"/>
    </location>
</feature>
<name>NTPPA_CLOBH</name>
<accession>A5I684</accession>
<accession>A7G7G7</accession>
<proteinExistence type="inferred from homology"/>